<proteinExistence type="evidence at protein level"/>
<name>C7A14_PLAGD</name>
<evidence type="ECO:0000250" key="1">
    <source>
        <dbReference type="UniProtKB" id="Q96242"/>
    </source>
</evidence>
<evidence type="ECO:0000255" key="2"/>
<evidence type="ECO:0000269" key="3">
    <source>
    </source>
</evidence>
<evidence type="ECO:0000303" key="4">
    <source>
    </source>
</evidence>
<evidence type="ECO:0000305" key="5"/>
<dbReference type="EC" id="1.14.14.63" evidence="3"/>
<dbReference type="EMBL" id="KU878855">
    <property type="protein sequence ID" value="AOG74838.1"/>
    <property type="molecule type" value="mRNA"/>
</dbReference>
<dbReference type="EMBL" id="LC209200">
    <property type="protein sequence ID" value="BAX04008.1"/>
    <property type="molecule type" value="mRNA"/>
</dbReference>
<dbReference type="SMR" id="A0A1I9Q5Z0"/>
<dbReference type="KEGG" id="ag:BAX04008"/>
<dbReference type="BRENDA" id="1.14.14.115">
    <property type="organism ID" value="15439"/>
</dbReference>
<dbReference type="BRENDA" id="1.14.14.126">
    <property type="organism ID" value="15439"/>
</dbReference>
<dbReference type="BRENDA" id="1.14.14.63">
    <property type="organism ID" value="15439"/>
</dbReference>
<dbReference type="GO" id="GO:0016020">
    <property type="term" value="C:membrane"/>
    <property type="evidence" value="ECO:0007669"/>
    <property type="project" value="UniProtKB-SubCell"/>
</dbReference>
<dbReference type="GO" id="GO:0020037">
    <property type="term" value="F:heme binding"/>
    <property type="evidence" value="ECO:0007669"/>
    <property type="project" value="InterPro"/>
</dbReference>
<dbReference type="GO" id="GO:0005506">
    <property type="term" value="F:iron ion binding"/>
    <property type="evidence" value="ECO:0007669"/>
    <property type="project" value="InterPro"/>
</dbReference>
<dbReference type="GO" id="GO:0004497">
    <property type="term" value="F:monooxygenase activity"/>
    <property type="evidence" value="ECO:0007669"/>
    <property type="project" value="UniProtKB-KW"/>
</dbReference>
<dbReference type="GO" id="GO:0016705">
    <property type="term" value="F:oxidoreductase activity, acting on paired donors, with incorporation or reduction of molecular oxygen"/>
    <property type="evidence" value="ECO:0007669"/>
    <property type="project" value="InterPro"/>
</dbReference>
<dbReference type="GO" id="GO:0009058">
    <property type="term" value="P:biosynthetic process"/>
    <property type="evidence" value="ECO:0007669"/>
    <property type="project" value="UniProtKB-ARBA"/>
</dbReference>
<dbReference type="GO" id="GO:0016125">
    <property type="term" value="P:sterol metabolic process"/>
    <property type="evidence" value="ECO:0007669"/>
    <property type="project" value="TreeGrafter"/>
</dbReference>
<dbReference type="CDD" id="cd11043">
    <property type="entry name" value="CYP90-like"/>
    <property type="match status" value="1"/>
</dbReference>
<dbReference type="FunFam" id="1.10.630.10:FF:000022">
    <property type="entry name" value="Taxadiene 5-alpha hydroxylase"/>
    <property type="match status" value="1"/>
</dbReference>
<dbReference type="Gene3D" id="1.10.630.10">
    <property type="entry name" value="Cytochrome P450"/>
    <property type="match status" value="1"/>
</dbReference>
<dbReference type="InterPro" id="IPR001128">
    <property type="entry name" value="Cyt_P450"/>
</dbReference>
<dbReference type="InterPro" id="IPR017972">
    <property type="entry name" value="Cyt_P450_CS"/>
</dbReference>
<dbReference type="InterPro" id="IPR002401">
    <property type="entry name" value="Cyt_P450_E_grp-I"/>
</dbReference>
<dbReference type="InterPro" id="IPR036396">
    <property type="entry name" value="Cyt_P450_sf"/>
</dbReference>
<dbReference type="PANTHER" id="PTHR24286:SF366">
    <property type="entry name" value="BETA-AMYRIN 28-OXIDASE"/>
    <property type="match status" value="1"/>
</dbReference>
<dbReference type="PANTHER" id="PTHR24286">
    <property type="entry name" value="CYTOCHROME P450 26"/>
    <property type="match status" value="1"/>
</dbReference>
<dbReference type="Pfam" id="PF00067">
    <property type="entry name" value="p450"/>
    <property type="match status" value="1"/>
</dbReference>
<dbReference type="PRINTS" id="PR00463">
    <property type="entry name" value="EP450I"/>
</dbReference>
<dbReference type="PRINTS" id="PR00385">
    <property type="entry name" value="P450"/>
</dbReference>
<dbReference type="SUPFAM" id="SSF48264">
    <property type="entry name" value="Cytochrome P450"/>
    <property type="match status" value="1"/>
</dbReference>
<dbReference type="PROSITE" id="PS00086">
    <property type="entry name" value="CYTOCHROME_P450"/>
    <property type="match status" value="1"/>
</dbReference>
<accession>A0A1I9Q5Z0</accession>
<keyword id="KW-0349">Heme</keyword>
<keyword id="KW-0408">Iron</keyword>
<keyword id="KW-0472">Membrane</keyword>
<keyword id="KW-0479">Metal-binding</keyword>
<keyword id="KW-0503">Monooxygenase</keyword>
<keyword id="KW-0560">Oxidoreductase</keyword>
<keyword id="KW-0812">Transmembrane</keyword>
<keyword id="KW-1133">Transmembrane helix</keyword>
<gene>
    <name evidence="4" type="primary">CYP716A141</name>
</gene>
<reference key="1">
    <citation type="submission" date="2016-03" db="EMBL/GenBank/DDBJ databases">
        <title>CYP716 enzymes form the cradle of triterpenoid diversity in eudicots.</title>
        <authorList>
            <person name="Miettinen K."/>
            <person name="Pollier J."/>
            <person name="Arendt P."/>
            <person name="Moses T."/>
            <person name="Mertens J."/>
            <person name="Goossens A."/>
        </authorList>
    </citation>
    <scope>NUCLEOTIDE SEQUENCE [MRNA]</scope>
</reference>
<reference key="2">
    <citation type="journal article" date="2017" name="Plant Cell Physiol.">
        <title>Cytochrome P450 monooxygenase CYP716A141 is a unique beta-amyrin C-16beta oxidase involved in triterpenoid saponin biosynthesis in Platycodon grandiflorus.</title>
        <authorList>
            <person name="Tamura K."/>
            <person name="Teranishi Y."/>
            <person name="Ueda S."/>
            <person name="Suzuki H."/>
            <person name="Kawano N."/>
            <person name="Yoshimatsu K."/>
            <person name="Saito K."/>
            <person name="Kawahara N."/>
            <person name="Muranaka T."/>
            <person name="Seki H."/>
        </authorList>
    </citation>
    <scope>NUCLEOTIDE SEQUENCE [MRNA]</scope>
    <scope>FUNCTION</scope>
    <scope>CATALYTIC ACTIVITY</scope>
    <scope>TISSUE SPECIFICITY</scope>
</reference>
<organism>
    <name type="scientific">Platycodon grandiflorus</name>
    <name type="common">Balloon flower</name>
    <name type="synonym">Campanula grandiflora</name>
    <dbReference type="NCBI Taxonomy" id="94286"/>
    <lineage>
        <taxon>Eukaryota</taxon>
        <taxon>Viridiplantae</taxon>
        <taxon>Streptophyta</taxon>
        <taxon>Embryophyta</taxon>
        <taxon>Tracheophyta</taxon>
        <taxon>Spermatophyta</taxon>
        <taxon>Magnoliopsida</taxon>
        <taxon>eudicotyledons</taxon>
        <taxon>Gunneridae</taxon>
        <taxon>Pentapetalae</taxon>
        <taxon>asterids</taxon>
        <taxon>campanulids</taxon>
        <taxon>Asterales</taxon>
        <taxon>Campanulaceae</taxon>
        <taxon>Platycodon</taxon>
    </lineage>
</organism>
<protein>
    <recommendedName>
        <fullName evidence="4">Beta-amyrin 16-beta-monooxygenase</fullName>
        <ecNumber evidence="3">1.14.14.63</ecNumber>
    </recommendedName>
    <alternativeName>
        <fullName evidence="4">Beta-amyrin 16-oxidase</fullName>
    </alternativeName>
    <alternativeName>
        <fullName evidence="4">Cytochrome P450 716A141</fullName>
    </alternativeName>
</protein>
<comment type="function">
    <text evidence="3">Involved in triterpenoid saponin biosynthesis in roots (PubMed:28371833). Catalyzes the hydroxylation of beta-amyrin at the C-16 beta position to form maniladiol (PubMed:28371833). Is also able to oxidize oleanolat to cochalate (PubMed:28371833). Has weak activity catalyzing the three-step oxidation at C-28 of beta-amyrin to form oleanolate (PubMed:28371833).</text>
</comment>
<comment type="catalytic activity">
    <reaction evidence="3">
        <text>beta-amyrin + reduced [NADPH--hemoprotein reductase] + O2 = maniladiol + oxidized [NADPH--hemoprotein reductase] + H2O + H(+)</text>
        <dbReference type="Rhea" id="RHEA:55440"/>
        <dbReference type="Rhea" id="RHEA-COMP:11964"/>
        <dbReference type="Rhea" id="RHEA-COMP:11965"/>
        <dbReference type="ChEBI" id="CHEBI:10352"/>
        <dbReference type="ChEBI" id="CHEBI:15377"/>
        <dbReference type="ChEBI" id="CHEBI:15378"/>
        <dbReference type="ChEBI" id="CHEBI:15379"/>
        <dbReference type="ChEBI" id="CHEBI:57618"/>
        <dbReference type="ChEBI" id="CHEBI:58210"/>
        <dbReference type="ChEBI" id="CHEBI:138945"/>
        <dbReference type="EC" id="1.14.14.63"/>
    </reaction>
    <physiologicalReaction direction="left-to-right" evidence="3">
        <dbReference type="Rhea" id="RHEA:55441"/>
    </physiologicalReaction>
</comment>
<comment type="catalytic activity">
    <reaction evidence="3">
        <text>oleanolate + reduced [NADPH--hemoprotein reductase] + O2 = cochalate + oxidized [NADPH--hemoprotein reductase] + H2O + H(+)</text>
        <dbReference type="Rhea" id="RHEA:55444"/>
        <dbReference type="Rhea" id="RHEA-COMP:11964"/>
        <dbReference type="Rhea" id="RHEA-COMP:11965"/>
        <dbReference type="ChEBI" id="CHEBI:15377"/>
        <dbReference type="ChEBI" id="CHEBI:15378"/>
        <dbReference type="ChEBI" id="CHEBI:15379"/>
        <dbReference type="ChEBI" id="CHEBI:57618"/>
        <dbReference type="ChEBI" id="CHEBI:58210"/>
        <dbReference type="ChEBI" id="CHEBI:82828"/>
        <dbReference type="ChEBI" id="CHEBI:138946"/>
        <dbReference type="EC" id="1.14.14.63"/>
    </reaction>
    <physiologicalReaction direction="left-to-right" evidence="3">
        <dbReference type="Rhea" id="RHEA:55445"/>
    </physiologicalReaction>
</comment>
<comment type="cofactor">
    <cofactor evidence="1">
        <name>heme</name>
        <dbReference type="ChEBI" id="CHEBI:30413"/>
    </cofactor>
</comment>
<comment type="subcellular location">
    <subcellularLocation>
        <location evidence="2">Membrane</location>
        <topology evidence="2">Single-pass membrane protein</topology>
    </subcellularLocation>
</comment>
<comment type="tissue specificity">
    <text evidence="3">Highly expressed in roots (PubMed:28371833). Expressed at very low levels in leaves and petals (PubMed:28371833).</text>
</comment>
<comment type="similarity">
    <text evidence="5">Belongs to the cytochrome P450 family.</text>
</comment>
<feature type="chain" id="PRO_0000454861" description="Beta-amyrin 16-beta-monooxygenase">
    <location>
        <begin position="1"/>
        <end position="481"/>
    </location>
</feature>
<feature type="transmembrane region" description="Helical" evidence="2">
    <location>
        <begin position="4"/>
        <end position="24"/>
    </location>
</feature>
<feature type="binding site" description="axial binding residue" evidence="1">
    <location>
        <position position="428"/>
    </location>
    <ligand>
        <name>heme</name>
        <dbReference type="ChEBI" id="CHEBI:30413"/>
    </ligand>
    <ligandPart>
        <name>Fe</name>
        <dbReference type="ChEBI" id="CHEBI:18248"/>
    </ligandPart>
</feature>
<sequence length="481" mass="54169">MDSLFIIISLVIVILTTIFILSNLLSKKTILLPGKTGLPLIGESIDYFNKLRTGINEKFVMERKLKYASDVFKTSILGENMAFLTGPEGNKFLFSNENKLVQVWWPSSVDSIIKKSHNKSAQAESAKVRVLLPPFLRAHAIKHYVSTMDSELRQHVADFWVGRDEVEVCPLVRKYTFALAVRLFLSVRDPGELEALARPFEEAAGGIIAIPINFPGTRFNRGIKASQRIRKVIGGIIEQRRKDLSEGKATPSQDLLSHMIVEVDRRNAENPDIAPATDSDISSDILGLLIGGYDTINTTIVFVMMTLVEYPDVYDQVLKEQREIAASKAPGELLNWDDLGKMKYSWNVACEVLRLRPPTVGAFRVAKTDFNYGGYTIPKGWKLHYIPHFTQKNPDYFPNPEKFDPSRFAGDGPAPYTFVPFGGGPRMCPGNEYARAEILVFMHNIILRYNWEKLIPNEKVVIDPLPRPSQGLPIRLIPHKA</sequence>